<protein>
    <recommendedName>
        <fullName evidence="1">Enolase</fullName>
        <ecNumber evidence="1">4.2.1.11</ecNumber>
    </recommendedName>
    <alternativeName>
        <fullName evidence="1">2-phospho-D-glycerate hydro-lyase</fullName>
    </alternativeName>
    <alternativeName>
        <fullName evidence="1">2-phosphoglycerate dehydratase</fullName>
    </alternativeName>
</protein>
<proteinExistence type="inferred from homology"/>
<gene>
    <name evidence="1" type="primary">eno</name>
    <name type="ordered locus">YpAngola_A0979</name>
</gene>
<evidence type="ECO:0000255" key="1">
    <source>
        <dbReference type="HAMAP-Rule" id="MF_00318"/>
    </source>
</evidence>
<keyword id="KW-0963">Cytoplasm</keyword>
<keyword id="KW-0324">Glycolysis</keyword>
<keyword id="KW-0456">Lyase</keyword>
<keyword id="KW-0460">Magnesium</keyword>
<keyword id="KW-0479">Metal-binding</keyword>
<keyword id="KW-0964">Secreted</keyword>
<dbReference type="EC" id="4.2.1.11" evidence="1"/>
<dbReference type="EMBL" id="CP000901">
    <property type="protein sequence ID" value="ABX87449.1"/>
    <property type="molecule type" value="Genomic_DNA"/>
</dbReference>
<dbReference type="RefSeq" id="WP_002209377.1">
    <property type="nucleotide sequence ID" value="NZ_CP009935.1"/>
</dbReference>
<dbReference type="SMR" id="A9R1D1"/>
<dbReference type="GeneID" id="96664252"/>
<dbReference type="KEGG" id="ypg:YpAngola_A0979"/>
<dbReference type="PATRIC" id="fig|349746.12.peg.1930"/>
<dbReference type="UniPathway" id="UPA00109">
    <property type="reaction ID" value="UER00187"/>
</dbReference>
<dbReference type="GO" id="GO:0009986">
    <property type="term" value="C:cell surface"/>
    <property type="evidence" value="ECO:0007669"/>
    <property type="project" value="UniProtKB-SubCell"/>
</dbReference>
<dbReference type="GO" id="GO:0005576">
    <property type="term" value="C:extracellular region"/>
    <property type="evidence" value="ECO:0007669"/>
    <property type="project" value="UniProtKB-SubCell"/>
</dbReference>
<dbReference type="GO" id="GO:0000015">
    <property type="term" value="C:phosphopyruvate hydratase complex"/>
    <property type="evidence" value="ECO:0007669"/>
    <property type="project" value="InterPro"/>
</dbReference>
<dbReference type="GO" id="GO:0000287">
    <property type="term" value="F:magnesium ion binding"/>
    <property type="evidence" value="ECO:0007669"/>
    <property type="project" value="UniProtKB-UniRule"/>
</dbReference>
<dbReference type="GO" id="GO:0004634">
    <property type="term" value="F:phosphopyruvate hydratase activity"/>
    <property type="evidence" value="ECO:0007669"/>
    <property type="project" value="UniProtKB-UniRule"/>
</dbReference>
<dbReference type="GO" id="GO:0006096">
    <property type="term" value="P:glycolytic process"/>
    <property type="evidence" value="ECO:0007669"/>
    <property type="project" value="UniProtKB-UniRule"/>
</dbReference>
<dbReference type="CDD" id="cd03313">
    <property type="entry name" value="enolase"/>
    <property type="match status" value="1"/>
</dbReference>
<dbReference type="FunFam" id="3.20.20.120:FF:000001">
    <property type="entry name" value="Enolase"/>
    <property type="match status" value="1"/>
</dbReference>
<dbReference type="FunFam" id="3.30.390.10:FF:000001">
    <property type="entry name" value="Enolase"/>
    <property type="match status" value="1"/>
</dbReference>
<dbReference type="Gene3D" id="3.20.20.120">
    <property type="entry name" value="Enolase-like C-terminal domain"/>
    <property type="match status" value="1"/>
</dbReference>
<dbReference type="Gene3D" id="3.30.390.10">
    <property type="entry name" value="Enolase-like, N-terminal domain"/>
    <property type="match status" value="1"/>
</dbReference>
<dbReference type="HAMAP" id="MF_00318">
    <property type="entry name" value="Enolase"/>
    <property type="match status" value="1"/>
</dbReference>
<dbReference type="InterPro" id="IPR000941">
    <property type="entry name" value="Enolase"/>
</dbReference>
<dbReference type="InterPro" id="IPR036849">
    <property type="entry name" value="Enolase-like_C_sf"/>
</dbReference>
<dbReference type="InterPro" id="IPR029017">
    <property type="entry name" value="Enolase-like_N"/>
</dbReference>
<dbReference type="InterPro" id="IPR020810">
    <property type="entry name" value="Enolase_C"/>
</dbReference>
<dbReference type="InterPro" id="IPR020809">
    <property type="entry name" value="Enolase_CS"/>
</dbReference>
<dbReference type="InterPro" id="IPR020811">
    <property type="entry name" value="Enolase_N"/>
</dbReference>
<dbReference type="NCBIfam" id="TIGR01060">
    <property type="entry name" value="eno"/>
    <property type="match status" value="1"/>
</dbReference>
<dbReference type="PANTHER" id="PTHR11902">
    <property type="entry name" value="ENOLASE"/>
    <property type="match status" value="1"/>
</dbReference>
<dbReference type="PANTHER" id="PTHR11902:SF1">
    <property type="entry name" value="ENOLASE"/>
    <property type="match status" value="1"/>
</dbReference>
<dbReference type="Pfam" id="PF00113">
    <property type="entry name" value="Enolase_C"/>
    <property type="match status" value="1"/>
</dbReference>
<dbReference type="Pfam" id="PF03952">
    <property type="entry name" value="Enolase_N"/>
    <property type="match status" value="1"/>
</dbReference>
<dbReference type="PIRSF" id="PIRSF001400">
    <property type="entry name" value="Enolase"/>
    <property type="match status" value="1"/>
</dbReference>
<dbReference type="PRINTS" id="PR00148">
    <property type="entry name" value="ENOLASE"/>
</dbReference>
<dbReference type="SFLD" id="SFLDF00002">
    <property type="entry name" value="enolase"/>
    <property type="match status" value="1"/>
</dbReference>
<dbReference type="SFLD" id="SFLDG00178">
    <property type="entry name" value="enolase"/>
    <property type="match status" value="1"/>
</dbReference>
<dbReference type="SMART" id="SM01192">
    <property type="entry name" value="Enolase_C"/>
    <property type="match status" value="1"/>
</dbReference>
<dbReference type="SMART" id="SM01193">
    <property type="entry name" value="Enolase_N"/>
    <property type="match status" value="1"/>
</dbReference>
<dbReference type="SUPFAM" id="SSF51604">
    <property type="entry name" value="Enolase C-terminal domain-like"/>
    <property type="match status" value="1"/>
</dbReference>
<dbReference type="SUPFAM" id="SSF54826">
    <property type="entry name" value="Enolase N-terminal domain-like"/>
    <property type="match status" value="1"/>
</dbReference>
<dbReference type="PROSITE" id="PS00164">
    <property type="entry name" value="ENOLASE"/>
    <property type="match status" value="1"/>
</dbReference>
<sequence>MSKIVKVIGREIIDSRGNPTVEAEVHLEGGFVGLAAAPSGASTGSREALELRDGDKSRFLGKGVLKAVAAVNGPIAQAVIGKDAKDQANIDKIMIDLDGTENKSQFGANAILAVSLAAAKAAAASKGMPLYEHIAELNGTPGKFSMPLPMMNIINGGEHADNNVDIQEFMIQPVGAKTLKEAVRIGSEVFHHLAKVLKAKGLNTAVGDEGGYAPNLGSNAEALAVIAEAVKAAGYELGKDITLAMDCAASEFYKDGKYVLAGEGNKAFTSEEFTHFLEDLTKQYPIVSIEDGLDESDWAGFKYQTEVLGDKIQLVGDDLFVTNTKILKEGIEKGVANSILIKFNQIGSLTETLAAIKMAKDAGYTAVISHRSGETEDATIADLAVGTAAGQIKTGSMSRSDRVAKYNQLIRIEEALGDRAPFNGLKEVKGQ</sequence>
<feature type="chain" id="PRO_1000115938" description="Enolase">
    <location>
        <begin position="1"/>
        <end position="431"/>
    </location>
</feature>
<feature type="active site" description="Proton donor" evidence="1">
    <location>
        <position position="209"/>
    </location>
</feature>
<feature type="active site" description="Proton acceptor" evidence="1">
    <location>
        <position position="342"/>
    </location>
</feature>
<feature type="binding site" evidence="1">
    <location>
        <position position="167"/>
    </location>
    <ligand>
        <name>(2R)-2-phosphoglycerate</name>
        <dbReference type="ChEBI" id="CHEBI:58289"/>
    </ligand>
</feature>
<feature type="binding site" evidence="1">
    <location>
        <position position="246"/>
    </location>
    <ligand>
        <name>Mg(2+)</name>
        <dbReference type="ChEBI" id="CHEBI:18420"/>
    </ligand>
</feature>
<feature type="binding site" evidence="1">
    <location>
        <position position="290"/>
    </location>
    <ligand>
        <name>Mg(2+)</name>
        <dbReference type="ChEBI" id="CHEBI:18420"/>
    </ligand>
</feature>
<feature type="binding site" evidence="1">
    <location>
        <position position="317"/>
    </location>
    <ligand>
        <name>Mg(2+)</name>
        <dbReference type="ChEBI" id="CHEBI:18420"/>
    </ligand>
</feature>
<feature type="binding site" evidence="1">
    <location>
        <position position="342"/>
    </location>
    <ligand>
        <name>(2R)-2-phosphoglycerate</name>
        <dbReference type="ChEBI" id="CHEBI:58289"/>
    </ligand>
</feature>
<feature type="binding site" evidence="1">
    <location>
        <position position="371"/>
    </location>
    <ligand>
        <name>(2R)-2-phosphoglycerate</name>
        <dbReference type="ChEBI" id="CHEBI:58289"/>
    </ligand>
</feature>
<feature type="binding site" evidence="1">
    <location>
        <position position="372"/>
    </location>
    <ligand>
        <name>(2R)-2-phosphoglycerate</name>
        <dbReference type="ChEBI" id="CHEBI:58289"/>
    </ligand>
</feature>
<feature type="binding site" evidence="1">
    <location>
        <position position="393"/>
    </location>
    <ligand>
        <name>(2R)-2-phosphoglycerate</name>
        <dbReference type="ChEBI" id="CHEBI:58289"/>
    </ligand>
</feature>
<accession>A9R1D1</accession>
<reference key="1">
    <citation type="journal article" date="2010" name="J. Bacteriol.">
        <title>Genome sequence of the deep-rooted Yersinia pestis strain Angola reveals new insights into the evolution and pangenome of the plague bacterium.</title>
        <authorList>
            <person name="Eppinger M."/>
            <person name="Worsham P.L."/>
            <person name="Nikolich M.P."/>
            <person name="Riley D.R."/>
            <person name="Sebastian Y."/>
            <person name="Mou S."/>
            <person name="Achtman M."/>
            <person name="Lindler L.E."/>
            <person name="Ravel J."/>
        </authorList>
    </citation>
    <scope>NUCLEOTIDE SEQUENCE [LARGE SCALE GENOMIC DNA]</scope>
    <source>
        <strain>Angola</strain>
    </source>
</reference>
<comment type="function">
    <text evidence="1">Catalyzes the reversible conversion of 2-phosphoglycerate (2-PG) into phosphoenolpyruvate (PEP). It is essential for the degradation of carbohydrates via glycolysis.</text>
</comment>
<comment type="catalytic activity">
    <reaction evidence="1">
        <text>(2R)-2-phosphoglycerate = phosphoenolpyruvate + H2O</text>
        <dbReference type="Rhea" id="RHEA:10164"/>
        <dbReference type="ChEBI" id="CHEBI:15377"/>
        <dbReference type="ChEBI" id="CHEBI:58289"/>
        <dbReference type="ChEBI" id="CHEBI:58702"/>
        <dbReference type="EC" id="4.2.1.11"/>
    </reaction>
</comment>
<comment type="cofactor">
    <cofactor evidence="1">
        <name>Mg(2+)</name>
        <dbReference type="ChEBI" id="CHEBI:18420"/>
    </cofactor>
    <text evidence="1">Binds a second Mg(2+) ion via substrate during catalysis.</text>
</comment>
<comment type="pathway">
    <text evidence="1">Carbohydrate degradation; glycolysis; pyruvate from D-glyceraldehyde 3-phosphate: step 4/5.</text>
</comment>
<comment type="subunit">
    <text evidence="1">Component of the RNA degradosome, a multiprotein complex involved in RNA processing and mRNA degradation.</text>
</comment>
<comment type="subcellular location">
    <subcellularLocation>
        <location evidence="1">Cytoplasm</location>
    </subcellularLocation>
    <subcellularLocation>
        <location evidence="1">Secreted</location>
    </subcellularLocation>
    <subcellularLocation>
        <location evidence="1">Cell surface</location>
    </subcellularLocation>
    <text evidence="1">Fractions of enolase are present in both the cytoplasm and on the cell surface.</text>
</comment>
<comment type="similarity">
    <text evidence="1">Belongs to the enolase family.</text>
</comment>
<name>ENO_YERPG</name>
<organism>
    <name type="scientific">Yersinia pestis bv. Antiqua (strain Angola)</name>
    <dbReference type="NCBI Taxonomy" id="349746"/>
    <lineage>
        <taxon>Bacteria</taxon>
        <taxon>Pseudomonadati</taxon>
        <taxon>Pseudomonadota</taxon>
        <taxon>Gammaproteobacteria</taxon>
        <taxon>Enterobacterales</taxon>
        <taxon>Yersiniaceae</taxon>
        <taxon>Yersinia</taxon>
    </lineage>
</organism>